<keyword id="KW-0687">Ribonucleoprotein</keyword>
<keyword id="KW-0689">Ribosomal protein</keyword>
<keyword id="KW-0694">RNA-binding</keyword>
<keyword id="KW-0699">rRNA-binding</keyword>
<keyword id="KW-0820">tRNA-binding</keyword>
<protein>
    <recommendedName>
        <fullName evidence="1">Large ribosomal subunit protein uL16</fullName>
    </recommendedName>
    <alternativeName>
        <fullName evidence="3">50S ribosomal protein L16</fullName>
    </alternativeName>
</protein>
<name>RL16_STAAE</name>
<sequence>MLLPKRVKYRRQHRPKTTGRSKGGNYVTFGEFGLQATTTSWITSRQIESARIAMTRYMKRGGKVWIKIFPHTPYTKKPLEVRMGAGKGAVEGWIAVVKPGRILFEVAGVSEEVAREALRLASHKLPVKTKFVKREELGGETNES</sequence>
<evidence type="ECO:0000255" key="1">
    <source>
        <dbReference type="HAMAP-Rule" id="MF_01342"/>
    </source>
</evidence>
<evidence type="ECO:0000256" key="2">
    <source>
        <dbReference type="SAM" id="MobiDB-lite"/>
    </source>
</evidence>
<evidence type="ECO:0000305" key="3"/>
<proteinExistence type="inferred from homology"/>
<dbReference type="EMBL" id="AP009351">
    <property type="protein sequence ID" value="BAF68417.1"/>
    <property type="molecule type" value="Genomic_DNA"/>
</dbReference>
<dbReference type="RefSeq" id="WP_000926310.1">
    <property type="nucleotide sequence ID" value="NZ_JBBIAE010000006.1"/>
</dbReference>
<dbReference type="SMR" id="A6QJ85"/>
<dbReference type="GeneID" id="98346555"/>
<dbReference type="KEGG" id="sae:NWMN_2145"/>
<dbReference type="HOGENOM" id="CLU_078858_2_1_9"/>
<dbReference type="Proteomes" id="UP000006386">
    <property type="component" value="Chromosome"/>
</dbReference>
<dbReference type="GO" id="GO:0022625">
    <property type="term" value="C:cytosolic large ribosomal subunit"/>
    <property type="evidence" value="ECO:0007669"/>
    <property type="project" value="TreeGrafter"/>
</dbReference>
<dbReference type="GO" id="GO:0019843">
    <property type="term" value="F:rRNA binding"/>
    <property type="evidence" value="ECO:0007669"/>
    <property type="project" value="UniProtKB-UniRule"/>
</dbReference>
<dbReference type="GO" id="GO:0003735">
    <property type="term" value="F:structural constituent of ribosome"/>
    <property type="evidence" value="ECO:0007669"/>
    <property type="project" value="InterPro"/>
</dbReference>
<dbReference type="GO" id="GO:0000049">
    <property type="term" value="F:tRNA binding"/>
    <property type="evidence" value="ECO:0007669"/>
    <property type="project" value="UniProtKB-KW"/>
</dbReference>
<dbReference type="GO" id="GO:0006412">
    <property type="term" value="P:translation"/>
    <property type="evidence" value="ECO:0007669"/>
    <property type="project" value="UniProtKB-UniRule"/>
</dbReference>
<dbReference type="CDD" id="cd01433">
    <property type="entry name" value="Ribosomal_L16_L10e"/>
    <property type="match status" value="1"/>
</dbReference>
<dbReference type="FunFam" id="3.90.1170.10:FF:000001">
    <property type="entry name" value="50S ribosomal protein L16"/>
    <property type="match status" value="1"/>
</dbReference>
<dbReference type="Gene3D" id="3.90.1170.10">
    <property type="entry name" value="Ribosomal protein L10e/L16"/>
    <property type="match status" value="1"/>
</dbReference>
<dbReference type="HAMAP" id="MF_01342">
    <property type="entry name" value="Ribosomal_uL16"/>
    <property type="match status" value="1"/>
</dbReference>
<dbReference type="InterPro" id="IPR047873">
    <property type="entry name" value="Ribosomal_uL16"/>
</dbReference>
<dbReference type="InterPro" id="IPR000114">
    <property type="entry name" value="Ribosomal_uL16_bact-type"/>
</dbReference>
<dbReference type="InterPro" id="IPR020798">
    <property type="entry name" value="Ribosomal_uL16_CS"/>
</dbReference>
<dbReference type="InterPro" id="IPR016180">
    <property type="entry name" value="Ribosomal_uL16_dom"/>
</dbReference>
<dbReference type="InterPro" id="IPR036920">
    <property type="entry name" value="Ribosomal_uL16_sf"/>
</dbReference>
<dbReference type="NCBIfam" id="TIGR01164">
    <property type="entry name" value="rplP_bact"/>
    <property type="match status" value="1"/>
</dbReference>
<dbReference type="PANTHER" id="PTHR12220">
    <property type="entry name" value="50S/60S RIBOSOMAL PROTEIN L16"/>
    <property type="match status" value="1"/>
</dbReference>
<dbReference type="PANTHER" id="PTHR12220:SF13">
    <property type="entry name" value="LARGE RIBOSOMAL SUBUNIT PROTEIN UL16M"/>
    <property type="match status" value="1"/>
</dbReference>
<dbReference type="Pfam" id="PF00252">
    <property type="entry name" value="Ribosomal_L16"/>
    <property type="match status" value="1"/>
</dbReference>
<dbReference type="PRINTS" id="PR00060">
    <property type="entry name" value="RIBOSOMALL16"/>
</dbReference>
<dbReference type="SUPFAM" id="SSF54686">
    <property type="entry name" value="Ribosomal protein L16p/L10e"/>
    <property type="match status" value="1"/>
</dbReference>
<dbReference type="PROSITE" id="PS00586">
    <property type="entry name" value="RIBOSOMAL_L16_1"/>
    <property type="match status" value="1"/>
</dbReference>
<dbReference type="PROSITE" id="PS00701">
    <property type="entry name" value="RIBOSOMAL_L16_2"/>
    <property type="match status" value="1"/>
</dbReference>
<comment type="function">
    <text evidence="1">Binds 23S rRNA and is also seen to make contacts with the A and possibly P site tRNAs.</text>
</comment>
<comment type="subunit">
    <text evidence="1">Part of the 50S ribosomal subunit.</text>
</comment>
<comment type="similarity">
    <text evidence="1">Belongs to the universal ribosomal protein uL16 family.</text>
</comment>
<organism>
    <name type="scientific">Staphylococcus aureus (strain Newman)</name>
    <dbReference type="NCBI Taxonomy" id="426430"/>
    <lineage>
        <taxon>Bacteria</taxon>
        <taxon>Bacillati</taxon>
        <taxon>Bacillota</taxon>
        <taxon>Bacilli</taxon>
        <taxon>Bacillales</taxon>
        <taxon>Staphylococcaceae</taxon>
        <taxon>Staphylococcus</taxon>
    </lineage>
</organism>
<accession>A6QJ85</accession>
<feature type="chain" id="PRO_1000073330" description="Large ribosomal subunit protein uL16">
    <location>
        <begin position="1"/>
        <end position="144"/>
    </location>
</feature>
<feature type="region of interest" description="Disordered" evidence="2">
    <location>
        <begin position="1"/>
        <end position="23"/>
    </location>
</feature>
<feature type="compositionally biased region" description="Basic residues" evidence="2">
    <location>
        <begin position="1"/>
        <end position="19"/>
    </location>
</feature>
<gene>
    <name evidence="1" type="primary">rplP</name>
    <name type="ordered locus">NWMN_2145</name>
</gene>
<reference key="1">
    <citation type="journal article" date="2008" name="J. Bacteriol.">
        <title>Genome sequence of Staphylococcus aureus strain Newman and comparative analysis of staphylococcal genomes: polymorphism and evolution of two major pathogenicity islands.</title>
        <authorList>
            <person name="Baba T."/>
            <person name="Bae T."/>
            <person name="Schneewind O."/>
            <person name="Takeuchi F."/>
            <person name="Hiramatsu K."/>
        </authorList>
    </citation>
    <scope>NUCLEOTIDE SEQUENCE [LARGE SCALE GENOMIC DNA]</scope>
    <source>
        <strain>Newman</strain>
    </source>
</reference>